<reference key="1">
    <citation type="journal article" date="2010" name="Genome Biol. Evol.">
        <title>Continuing evolution of Burkholderia mallei through genome reduction and large-scale rearrangements.</title>
        <authorList>
            <person name="Losada L."/>
            <person name="Ronning C.M."/>
            <person name="DeShazer D."/>
            <person name="Woods D."/>
            <person name="Fedorova N."/>
            <person name="Kim H.S."/>
            <person name="Shabalina S.A."/>
            <person name="Pearson T.R."/>
            <person name="Brinkac L."/>
            <person name="Tan P."/>
            <person name="Nandi T."/>
            <person name="Crabtree J."/>
            <person name="Badger J."/>
            <person name="Beckstrom-Sternberg S."/>
            <person name="Saqib M."/>
            <person name="Schutzer S.E."/>
            <person name="Keim P."/>
            <person name="Nierman W.C."/>
        </authorList>
    </citation>
    <scope>NUCLEOTIDE SEQUENCE [LARGE SCALE GENOMIC DNA]</scope>
    <source>
        <strain>1106a</strain>
    </source>
</reference>
<feature type="chain" id="PRO_1000051721" description="Nucleotide-binding protein BURPS1106A_0919">
    <location>
        <begin position="1"/>
        <end position="161"/>
    </location>
</feature>
<proteinExistence type="inferred from homology"/>
<keyword id="KW-0547">Nucleotide-binding</keyword>
<gene>
    <name type="ordered locus">BURPS1106A_0919</name>
</gene>
<comment type="function">
    <text evidence="1">Nucleotide-binding protein.</text>
</comment>
<comment type="similarity">
    <text evidence="1">Belongs to the YajQ family.</text>
</comment>
<organism>
    <name type="scientific">Burkholderia pseudomallei (strain 1106a)</name>
    <dbReference type="NCBI Taxonomy" id="357348"/>
    <lineage>
        <taxon>Bacteria</taxon>
        <taxon>Pseudomonadati</taxon>
        <taxon>Pseudomonadota</taxon>
        <taxon>Betaproteobacteria</taxon>
        <taxon>Burkholderiales</taxon>
        <taxon>Burkholderiaceae</taxon>
        <taxon>Burkholderia</taxon>
        <taxon>pseudomallei group</taxon>
    </lineage>
</organism>
<dbReference type="EMBL" id="CP000572">
    <property type="protein sequence ID" value="ABN92444.1"/>
    <property type="molecule type" value="Genomic_DNA"/>
</dbReference>
<dbReference type="RefSeq" id="WP_004189237.1">
    <property type="nucleotide sequence ID" value="NC_009076.1"/>
</dbReference>
<dbReference type="SMR" id="A3NS79"/>
<dbReference type="KEGG" id="bpl:BURPS1106A_0919"/>
<dbReference type="HOGENOM" id="CLU_099839_1_0_4"/>
<dbReference type="Proteomes" id="UP000006738">
    <property type="component" value="Chromosome I"/>
</dbReference>
<dbReference type="GO" id="GO:0005829">
    <property type="term" value="C:cytosol"/>
    <property type="evidence" value="ECO:0007669"/>
    <property type="project" value="TreeGrafter"/>
</dbReference>
<dbReference type="GO" id="GO:0000166">
    <property type="term" value="F:nucleotide binding"/>
    <property type="evidence" value="ECO:0007669"/>
    <property type="project" value="TreeGrafter"/>
</dbReference>
<dbReference type="CDD" id="cd11740">
    <property type="entry name" value="YajQ_like"/>
    <property type="match status" value="1"/>
</dbReference>
<dbReference type="Gene3D" id="3.30.70.860">
    <property type="match status" value="1"/>
</dbReference>
<dbReference type="Gene3D" id="3.30.70.990">
    <property type="entry name" value="YajQ-like, domain 2"/>
    <property type="match status" value="1"/>
</dbReference>
<dbReference type="HAMAP" id="MF_00632">
    <property type="entry name" value="YajQ"/>
    <property type="match status" value="1"/>
</dbReference>
<dbReference type="InterPro" id="IPR007551">
    <property type="entry name" value="DUF520"/>
</dbReference>
<dbReference type="InterPro" id="IPR035571">
    <property type="entry name" value="UPF0234-like_C"/>
</dbReference>
<dbReference type="InterPro" id="IPR035570">
    <property type="entry name" value="UPF0234_N"/>
</dbReference>
<dbReference type="InterPro" id="IPR036183">
    <property type="entry name" value="YajQ-like_sf"/>
</dbReference>
<dbReference type="NCBIfam" id="NF003819">
    <property type="entry name" value="PRK05412.1"/>
    <property type="match status" value="1"/>
</dbReference>
<dbReference type="PANTHER" id="PTHR30476">
    <property type="entry name" value="UPF0234 PROTEIN YAJQ"/>
    <property type="match status" value="1"/>
</dbReference>
<dbReference type="PANTHER" id="PTHR30476:SF0">
    <property type="entry name" value="UPF0234 PROTEIN YAJQ"/>
    <property type="match status" value="1"/>
</dbReference>
<dbReference type="Pfam" id="PF04461">
    <property type="entry name" value="DUF520"/>
    <property type="match status" value="1"/>
</dbReference>
<dbReference type="SUPFAM" id="SSF89963">
    <property type="entry name" value="YajQ-like"/>
    <property type="match status" value="2"/>
</dbReference>
<protein>
    <recommendedName>
        <fullName evidence="1">Nucleotide-binding protein BURPS1106A_0919</fullName>
    </recommendedName>
</protein>
<accession>A3NS79</accession>
<evidence type="ECO:0000255" key="1">
    <source>
        <dbReference type="HAMAP-Rule" id="MF_00632"/>
    </source>
</evidence>
<name>Y919_BURP0</name>
<sequence length="161" mass="18036">MPSFDVVSEANMIEVKNAVEQSNKEISTRFDFKGSDARVEQKERELTLYADDDFKLGQVKDVLIGKMAKRNVDVRFLDYGKIEKIGGDKVKQVVTIKKGVSGDLAKKVVRIVKDSKIKVQASIQGDAVRVSGAKRDDLQSTIALLRKEVTDTPLDFNNFRD</sequence>